<protein>
    <recommendedName>
        <fullName evidence="1">4-hydroxy-tetrahydrodipicolinate reductase</fullName>
        <shortName evidence="1">HTPA reductase</shortName>
        <ecNumber evidence="1">1.17.1.8</ecNumber>
    </recommendedName>
</protein>
<comment type="function">
    <text evidence="1">Catalyzes the conversion of 4-hydroxy-tetrahydrodipicolinate (HTPA) to tetrahydrodipicolinate.</text>
</comment>
<comment type="catalytic activity">
    <reaction evidence="1">
        <text>(S)-2,3,4,5-tetrahydrodipicolinate + NAD(+) + H2O = (2S,4S)-4-hydroxy-2,3,4,5-tetrahydrodipicolinate + NADH + H(+)</text>
        <dbReference type="Rhea" id="RHEA:35323"/>
        <dbReference type="ChEBI" id="CHEBI:15377"/>
        <dbReference type="ChEBI" id="CHEBI:15378"/>
        <dbReference type="ChEBI" id="CHEBI:16845"/>
        <dbReference type="ChEBI" id="CHEBI:57540"/>
        <dbReference type="ChEBI" id="CHEBI:57945"/>
        <dbReference type="ChEBI" id="CHEBI:67139"/>
        <dbReference type="EC" id="1.17.1.8"/>
    </reaction>
</comment>
<comment type="catalytic activity">
    <reaction evidence="1">
        <text>(S)-2,3,4,5-tetrahydrodipicolinate + NADP(+) + H2O = (2S,4S)-4-hydroxy-2,3,4,5-tetrahydrodipicolinate + NADPH + H(+)</text>
        <dbReference type="Rhea" id="RHEA:35331"/>
        <dbReference type="ChEBI" id="CHEBI:15377"/>
        <dbReference type="ChEBI" id="CHEBI:15378"/>
        <dbReference type="ChEBI" id="CHEBI:16845"/>
        <dbReference type="ChEBI" id="CHEBI:57783"/>
        <dbReference type="ChEBI" id="CHEBI:58349"/>
        <dbReference type="ChEBI" id="CHEBI:67139"/>
        <dbReference type="EC" id="1.17.1.8"/>
    </reaction>
</comment>
<comment type="pathway">
    <text evidence="1">Amino-acid biosynthesis; L-lysine biosynthesis via DAP pathway; (S)-tetrahydrodipicolinate from L-aspartate: step 4/4.</text>
</comment>
<comment type="subcellular location">
    <subcellularLocation>
        <location evidence="1">Cytoplasm</location>
    </subcellularLocation>
</comment>
<comment type="similarity">
    <text evidence="1">Belongs to the DapB family.</text>
</comment>
<comment type="caution">
    <text evidence="2">Was originally thought to be a dihydrodipicolinate reductase (DHDPR), catalyzing the conversion of dihydrodipicolinate to tetrahydrodipicolinate. However, it was shown in E.coli that the substrate of the enzymatic reaction is not dihydrodipicolinate (DHDP) but in fact (2S,4S)-4-hydroxy-2,3,4,5-tetrahydrodipicolinic acid (HTPA), the product released by the DapA-catalyzed reaction.</text>
</comment>
<gene>
    <name evidence="1" type="primary">dapB</name>
    <name type="ordered locus">NGK_2493</name>
</gene>
<organism>
    <name type="scientific">Neisseria gonorrhoeae (strain NCCP11945)</name>
    <dbReference type="NCBI Taxonomy" id="521006"/>
    <lineage>
        <taxon>Bacteria</taxon>
        <taxon>Pseudomonadati</taxon>
        <taxon>Pseudomonadota</taxon>
        <taxon>Betaproteobacteria</taxon>
        <taxon>Neisseriales</taxon>
        <taxon>Neisseriaceae</taxon>
        <taxon>Neisseria</taxon>
    </lineage>
</organism>
<dbReference type="EC" id="1.17.1.8" evidence="1"/>
<dbReference type="EMBL" id="CP001050">
    <property type="protein sequence ID" value="ACF31093.1"/>
    <property type="molecule type" value="Genomic_DNA"/>
</dbReference>
<dbReference type="RefSeq" id="WP_003689993.1">
    <property type="nucleotide sequence ID" value="NC_011035.1"/>
</dbReference>
<dbReference type="SMR" id="B4RR35"/>
<dbReference type="GeneID" id="66754361"/>
<dbReference type="KEGG" id="ngk:NGK_2493"/>
<dbReference type="HOGENOM" id="CLU_047479_2_1_4"/>
<dbReference type="UniPathway" id="UPA00034">
    <property type="reaction ID" value="UER00018"/>
</dbReference>
<dbReference type="Proteomes" id="UP000002564">
    <property type="component" value="Chromosome"/>
</dbReference>
<dbReference type="GO" id="GO:0005829">
    <property type="term" value="C:cytosol"/>
    <property type="evidence" value="ECO:0007669"/>
    <property type="project" value="TreeGrafter"/>
</dbReference>
<dbReference type="GO" id="GO:0008839">
    <property type="term" value="F:4-hydroxy-tetrahydrodipicolinate reductase"/>
    <property type="evidence" value="ECO:0007669"/>
    <property type="project" value="UniProtKB-EC"/>
</dbReference>
<dbReference type="GO" id="GO:0051287">
    <property type="term" value="F:NAD binding"/>
    <property type="evidence" value="ECO:0007669"/>
    <property type="project" value="UniProtKB-UniRule"/>
</dbReference>
<dbReference type="GO" id="GO:0050661">
    <property type="term" value="F:NADP binding"/>
    <property type="evidence" value="ECO:0007669"/>
    <property type="project" value="UniProtKB-UniRule"/>
</dbReference>
<dbReference type="GO" id="GO:0016726">
    <property type="term" value="F:oxidoreductase activity, acting on CH or CH2 groups, NAD or NADP as acceptor"/>
    <property type="evidence" value="ECO:0007669"/>
    <property type="project" value="UniProtKB-UniRule"/>
</dbReference>
<dbReference type="GO" id="GO:0019877">
    <property type="term" value="P:diaminopimelate biosynthetic process"/>
    <property type="evidence" value="ECO:0007669"/>
    <property type="project" value="UniProtKB-UniRule"/>
</dbReference>
<dbReference type="GO" id="GO:0009089">
    <property type="term" value="P:lysine biosynthetic process via diaminopimelate"/>
    <property type="evidence" value="ECO:0007669"/>
    <property type="project" value="UniProtKB-UniRule"/>
</dbReference>
<dbReference type="CDD" id="cd02274">
    <property type="entry name" value="DHDPR_N"/>
    <property type="match status" value="1"/>
</dbReference>
<dbReference type="FunFam" id="3.30.360.10:FF:000004">
    <property type="entry name" value="4-hydroxy-tetrahydrodipicolinate reductase"/>
    <property type="match status" value="1"/>
</dbReference>
<dbReference type="FunFam" id="3.40.50.720:FF:000048">
    <property type="entry name" value="4-hydroxy-tetrahydrodipicolinate reductase"/>
    <property type="match status" value="1"/>
</dbReference>
<dbReference type="Gene3D" id="3.30.360.10">
    <property type="entry name" value="Dihydrodipicolinate Reductase, domain 2"/>
    <property type="match status" value="1"/>
</dbReference>
<dbReference type="Gene3D" id="3.40.50.720">
    <property type="entry name" value="NAD(P)-binding Rossmann-like Domain"/>
    <property type="match status" value="1"/>
</dbReference>
<dbReference type="HAMAP" id="MF_00102">
    <property type="entry name" value="DapB"/>
    <property type="match status" value="1"/>
</dbReference>
<dbReference type="InterPro" id="IPR022663">
    <property type="entry name" value="DapB_C"/>
</dbReference>
<dbReference type="InterPro" id="IPR000846">
    <property type="entry name" value="DapB_N"/>
</dbReference>
<dbReference type="InterPro" id="IPR022664">
    <property type="entry name" value="DapB_N_CS"/>
</dbReference>
<dbReference type="InterPro" id="IPR023940">
    <property type="entry name" value="DHDPR_bac"/>
</dbReference>
<dbReference type="InterPro" id="IPR036291">
    <property type="entry name" value="NAD(P)-bd_dom_sf"/>
</dbReference>
<dbReference type="NCBIfam" id="TIGR00036">
    <property type="entry name" value="dapB"/>
    <property type="match status" value="1"/>
</dbReference>
<dbReference type="PANTHER" id="PTHR20836:SF0">
    <property type="entry name" value="4-HYDROXY-TETRAHYDRODIPICOLINATE REDUCTASE 1, CHLOROPLASTIC-RELATED"/>
    <property type="match status" value="1"/>
</dbReference>
<dbReference type="PANTHER" id="PTHR20836">
    <property type="entry name" value="DIHYDRODIPICOLINATE REDUCTASE"/>
    <property type="match status" value="1"/>
</dbReference>
<dbReference type="Pfam" id="PF05173">
    <property type="entry name" value="DapB_C"/>
    <property type="match status" value="1"/>
</dbReference>
<dbReference type="Pfam" id="PF01113">
    <property type="entry name" value="DapB_N"/>
    <property type="match status" value="1"/>
</dbReference>
<dbReference type="PIRSF" id="PIRSF000161">
    <property type="entry name" value="DHPR"/>
    <property type="match status" value="1"/>
</dbReference>
<dbReference type="SUPFAM" id="SSF55347">
    <property type="entry name" value="Glyceraldehyde-3-phosphate dehydrogenase-like, C-terminal domain"/>
    <property type="match status" value="1"/>
</dbReference>
<dbReference type="SUPFAM" id="SSF51735">
    <property type="entry name" value="NAD(P)-binding Rossmann-fold domains"/>
    <property type="match status" value="1"/>
</dbReference>
<dbReference type="PROSITE" id="PS01298">
    <property type="entry name" value="DAPB"/>
    <property type="match status" value="1"/>
</dbReference>
<reference key="1">
    <citation type="journal article" date="2008" name="J. Bacteriol.">
        <title>Complete genome sequence of Neisseria gonorrhoeae NCCP11945.</title>
        <authorList>
            <person name="Chung G.T."/>
            <person name="Yoo J.S."/>
            <person name="Oh H.B."/>
            <person name="Lee Y.S."/>
            <person name="Cha S.H."/>
            <person name="Kim S.J."/>
            <person name="Yoo C.K."/>
        </authorList>
    </citation>
    <scope>NUCLEOTIDE SEQUENCE [LARGE SCALE GENOMIC DNA]</scope>
    <source>
        <strain>NCCP11945</strain>
    </source>
</reference>
<proteinExistence type="inferred from homology"/>
<name>DAPB_NEIG2</name>
<feature type="chain" id="PRO_1000093982" description="4-hydroxy-tetrahydrodipicolinate reductase">
    <location>
        <begin position="1"/>
        <end position="269"/>
    </location>
</feature>
<feature type="active site" description="Proton donor/acceptor" evidence="1">
    <location>
        <position position="156"/>
    </location>
</feature>
<feature type="active site" description="Proton donor" evidence="1">
    <location>
        <position position="160"/>
    </location>
</feature>
<feature type="binding site" evidence="1">
    <location>
        <begin position="10"/>
        <end position="15"/>
    </location>
    <ligand>
        <name>NAD(+)</name>
        <dbReference type="ChEBI" id="CHEBI:57540"/>
    </ligand>
</feature>
<feature type="binding site" evidence="1">
    <location>
        <position position="36"/>
    </location>
    <ligand>
        <name>NAD(+)</name>
        <dbReference type="ChEBI" id="CHEBI:57540"/>
    </ligand>
</feature>
<feature type="binding site" evidence="1">
    <location>
        <begin position="99"/>
        <end position="101"/>
    </location>
    <ligand>
        <name>NAD(+)</name>
        <dbReference type="ChEBI" id="CHEBI:57540"/>
    </ligand>
</feature>
<feature type="binding site" evidence="1">
    <location>
        <begin position="123"/>
        <end position="126"/>
    </location>
    <ligand>
        <name>NAD(+)</name>
        <dbReference type="ChEBI" id="CHEBI:57540"/>
    </ligand>
</feature>
<feature type="binding site" evidence="1">
    <location>
        <position position="157"/>
    </location>
    <ligand>
        <name>(S)-2,3,4,5-tetrahydrodipicolinate</name>
        <dbReference type="ChEBI" id="CHEBI:16845"/>
    </ligand>
</feature>
<feature type="binding site" evidence="1">
    <location>
        <begin position="166"/>
        <end position="167"/>
    </location>
    <ligand>
        <name>(S)-2,3,4,5-tetrahydrodipicolinate</name>
        <dbReference type="ChEBI" id="CHEBI:16845"/>
    </ligand>
</feature>
<evidence type="ECO:0000255" key="1">
    <source>
        <dbReference type="HAMAP-Rule" id="MF_00102"/>
    </source>
</evidence>
<evidence type="ECO:0000305" key="2"/>
<keyword id="KW-0028">Amino-acid biosynthesis</keyword>
<keyword id="KW-0963">Cytoplasm</keyword>
<keyword id="KW-0220">Diaminopimelate biosynthesis</keyword>
<keyword id="KW-0457">Lysine biosynthesis</keyword>
<keyword id="KW-0520">NAD</keyword>
<keyword id="KW-0521">NADP</keyword>
<keyword id="KW-0560">Oxidoreductase</keyword>
<sequence length="269" mass="28269">MIPLKIAIAGANGRMGRVLVEAVNNHPDTVLSGALEHSGSEALGLDAGYAVGLKTGIAISDDVDAVLAQSDVLIDFTRPEPTLKHLQKCVEKQVNIIIGTTGFDDAGKAAIRAAAEKTGIVFAANFSVGVNLTFHILDTVARVLNEGYDIEIIEGHHRHKVDAPSGTALRMGEVIAGALGRDLKQCAVYGREGHTGPRDPSTIGFATVRAGDIVGDHTALFATDGERVEITHKAGSRMTFAAGAVRAAVWVNGKTGLYDMQDVLGLNNR</sequence>
<accession>B4RR35</accession>